<accession>Q8LDU5</accession>
<accession>F4JI19</accession>
<accession>O81330</accession>
<accession>Q9M133</accession>
<reference key="1">
    <citation type="journal article" date="1999" name="Nature">
        <title>Sequence and analysis of chromosome 4 of the plant Arabidopsis thaliana.</title>
        <authorList>
            <person name="Mayer K.F.X."/>
            <person name="Schueller C."/>
            <person name="Wambutt R."/>
            <person name="Murphy G."/>
            <person name="Volckaert G."/>
            <person name="Pohl T."/>
            <person name="Duesterhoeft A."/>
            <person name="Stiekema W."/>
            <person name="Entian K.-D."/>
            <person name="Terryn N."/>
            <person name="Harris B."/>
            <person name="Ansorge W."/>
            <person name="Brandt P."/>
            <person name="Grivell L.A."/>
            <person name="Rieger M."/>
            <person name="Weichselgartner M."/>
            <person name="de Simone V."/>
            <person name="Obermaier B."/>
            <person name="Mache R."/>
            <person name="Mueller M."/>
            <person name="Kreis M."/>
            <person name="Delseny M."/>
            <person name="Puigdomenech P."/>
            <person name="Watson M."/>
            <person name="Schmidtheini T."/>
            <person name="Reichert B."/>
            <person name="Portetelle D."/>
            <person name="Perez-Alonso M."/>
            <person name="Boutry M."/>
            <person name="Bancroft I."/>
            <person name="Vos P."/>
            <person name="Hoheisel J."/>
            <person name="Zimmermann W."/>
            <person name="Wedler H."/>
            <person name="Ridley P."/>
            <person name="Langham S.-A."/>
            <person name="McCullagh B."/>
            <person name="Bilham L."/>
            <person name="Robben J."/>
            <person name="van der Schueren J."/>
            <person name="Grymonprez B."/>
            <person name="Chuang Y.-J."/>
            <person name="Vandenbussche F."/>
            <person name="Braeken M."/>
            <person name="Weltjens I."/>
            <person name="Voet M."/>
            <person name="Bastiaens I."/>
            <person name="Aert R."/>
            <person name="Defoor E."/>
            <person name="Weitzenegger T."/>
            <person name="Bothe G."/>
            <person name="Ramsperger U."/>
            <person name="Hilbert H."/>
            <person name="Braun M."/>
            <person name="Holzer E."/>
            <person name="Brandt A."/>
            <person name="Peters S."/>
            <person name="van Staveren M."/>
            <person name="Dirkse W."/>
            <person name="Mooijman P."/>
            <person name="Klein Lankhorst R."/>
            <person name="Rose M."/>
            <person name="Hauf J."/>
            <person name="Koetter P."/>
            <person name="Berneiser S."/>
            <person name="Hempel S."/>
            <person name="Feldpausch M."/>
            <person name="Lamberth S."/>
            <person name="Van den Daele H."/>
            <person name="De Keyser A."/>
            <person name="Buysshaert C."/>
            <person name="Gielen J."/>
            <person name="Villarroel R."/>
            <person name="De Clercq R."/>
            <person name="van Montagu M."/>
            <person name="Rogers J."/>
            <person name="Cronin A."/>
            <person name="Quail M.A."/>
            <person name="Bray-Allen S."/>
            <person name="Clark L."/>
            <person name="Doggett J."/>
            <person name="Hall S."/>
            <person name="Kay M."/>
            <person name="Lennard N."/>
            <person name="McLay K."/>
            <person name="Mayes R."/>
            <person name="Pettett A."/>
            <person name="Rajandream M.A."/>
            <person name="Lyne M."/>
            <person name="Benes V."/>
            <person name="Rechmann S."/>
            <person name="Borkova D."/>
            <person name="Bloecker H."/>
            <person name="Scharfe M."/>
            <person name="Grimm M."/>
            <person name="Loehnert T.-H."/>
            <person name="Dose S."/>
            <person name="de Haan M."/>
            <person name="Maarse A.C."/>
            <person name="Schaefer M."/>
            <person name="Mueller-Auer S."/>
            <person name="Gabel C."/>
            <person name="Fuchs M."/>
            <person name="Fartmann B."/>
            <person name="Granderath K."/>
            <person name="Dauner D."/>
            <person name="Herzl A."/>
            <person name="Neumann S."/>
            <person name="Argiriou A."/>
            <person name="Vitale D."/>
            <person name="Liguori R."/>
            <person name="Piravandi E."/>
            <person name="Massenet O."/>
            <person name="Quigley F."/>
            <person name="Clabauld G."/>
            <person name="Muendlein A."/>
            <person name="Felber R."/>
            <person name="Schnabl S."/>
            <person name="Hiller R."/>
            <person name="Schmidt W."/>
            <person name="Lecharny A."/>
            <person name="Aubourg S."/>
            <person name="Chefdor F."/>
            <person name="Cooke R."/>
            <person name="Berger C."/>
            <person name="Monfort A."/>
            <person name="Casacuberta E."/>
            <person name="Gibbons T."/>
            <person name="Weber N."/>
            <person name="Vandenbol M."/>
            <person name="Bargues M."/>
            <person name="Terol J."/>
            <person name="Torres A."/>
            <person name="Perez-Perez A."/>
            <person name="Purnelle B."/>
            <person name="Bent E."/>
            <person name="Johnson S."/>
            <person name="Tacon D."/>
            <person name="Jesse T."/>
            <person name="Heijnen L."/>
            <person name="Schwarz S."/>
            <person name="Scholler P."/>
            <person name="Heber S."/>
            <person name="Francs P."/>
            <person name="Bielke C."/>
            <person name="Frishman D."/>
            <person name="Haase D."/>
            <person name="Lemcke K."/>
            <person name="Mewes H.-W."/>
            <person name="Stocker S."/>
            <person name="Zaccaria P."/>
            <person name="Bevan M."/>
            <person name="Wilson R.K."/>
            <person name="de la Bastide M."/>
            <person name="Habermann K."/>
            <person name="Parnell L."/>
            <person name="Dedhia N."/>
            <person name="Gnoj L."/>
            <person name="Schutz K."/>
            <person name="Huang E."/>
            <person name="Spiegel L."/>
            <person name="Sekhon M."/>
            <person name="Murray J."/>
            <person name="Sheet P."/>
            <person name="Cordes M."/>
            <person name="Abu-Threideh J."/>
            <person name="Stoneking T."/>
            <person name="Kalicki J."/>
            <person name="Graves T."/>
            <person name="Harmon G."/>
            <person name="Edwards J."/>
            <person name="Latreille P."/>
            <person name="Courtney L."/>
            <person name="Cloud J."/>
            <person name="Abbott A."/>
            <person name="Scott K."/>
            <person name="Johnson D."/>
            <person name="Minx P."/>
            <person name="Bentley D."/>
            <person name="Fulton B."/>
            <person name="Miller N."/>
            <person name="Greco T."/>
            <person name="Kemp K."/>
            <person name="Kramer J."/>
            <person name="Fulton L."/>
            <person name="Mardis E."/>
            <person name="Dante M."/>
            <person name="Pepin K."/>
            <person name="Hillier L.W."/>
            <person name="Nelson J."/>
            <person name="Spieth J."/>
            <person name="Ryan E."/>
            <person name="Andrews S."/>
            <person name="Geisel C."/>
            <person name="Layman D."/>
            <person name="Du H."/>
            <person name="Ali J."/>
            <person name="Berghoff A."/>
            <person name="Jones K."/>
            <person name="Drone K."/>
            <person name="Cotton M."/>
            <person name="Joshu C."/>
            <person name="Antonoiu B."/>
            <person name="Zidanic M."/>
            <person name="Strong C."/>
            <person name="Sun H."/>
            <person name="Lamar B."/>
            <person name="Yordan C."/>
            <person name="Ma P."/>
            <person name="Zhong J."/>
            <person name="Preston R."/>
            <person name="Vil D."/>
            <person name="Shekher M."/>
            <person name="Matero A."/>
            <person name="Shah R."/>
            <person name="Swaby I.K."/>
            <person name="O'Shaughnessy A."/>
            <person name="Rodriguez M."/>
            <person name="Hoffman J."/>
            <person name="Till S."/>
            <person name="Granat S."/>
            <person name="Shohdy N."/>
            <person name="Hasegawa A."/>
            <person name="Hameed A."/>
            <person name="Lodhi M."/>
            <person name="Johnson A."/>
            <person name="Chen E."/>
            <person name="Marra M.A."/>
            <person name="Martienssen R."/>
            <person name="McCombie W.R."/>
        </authorList>
    </citation>
    <scope>NUCLEOTIDE SEQUENCE [LARGE SCALE GENOMIC DNA]</scope>
    <source>
        <strain>cv. Columbia</strain>
    </source>
</reference>
<reference key="2">
    <citation type="journal article" date="2017" name="Plant J.">
        <title>Araport11: a complete reannotation of the Arabidopsis thaliana reference genome.</title>
        <authorList>
            <person name="Cheng C.Y."/>
            <person name="Krishnakumar V."/>
            <person name="Chan A.P."/>
            <person name="Thibaud-Nissen F."/>
            <person name="Schobel S."/>
            <person name="Town C.D."/>
        </authorList>
    </citation>
    <scope>GENOME REANNOTATION</scope>
    <source>
        <strain>cv. Columbia</strain>
    </source>
</reference>
<reference key="3">
    <citation type="submission" date="2002-03" db="EMBL/GenBank/DDBJ databases">
        <title>Full-length cDNA from Arabidopsis thaliana.</title>
        <authorList>
            <person name="Brover V.V."/>
            <person name="Troukhan M.E."/>
            <person name="Alexandrov N.A."/>
            <person name="Lu Y.-P."/>
            <person name="Flavell R.B."/>
            <person name="Feldmann K.A."/>
        </authorList>
    </citation>
    <scope>NUCLEOTIDE SEQUENCE [LARGE SCALE MRNA] OF 1-210</scope>
</reference>
<reference key="4">
    <citation type="journal article" date="2004" name="Plant Cell">
        <title>Genome-wide analysis of Arabidopsis pentatricopeptide repeat proteins reveals their essential role in organelle biogenesis.</title>
        <authorList>
            <person name="Lurin C."/>
            <person name="Andres C."/>
            <person name="Aubourg S."/>
            <person name="Bellaoui M."/>
            <person name="Bitton F."/>
            <person name="Bruyere C."/>
            <person name="Caboche M."/>
            <person name="Debast C."/>
            <person name="Gualberto J."/>
            <person name="Hoffmann B."/>
            <person name="Lecharny A."/>
            <person name="Le Ret M."/>
            <person name="Martin-Magniette M.-L."/>
            <person name="Mireau H."/>
            <person name="Peeters N."/>
            <person name="Renou J.-P."/>
            <person name="Szurek B."/>
            <person name="Taconnat L."/>
            <person name="Small I."/>
        </authorList>
    </citation>
    <scope>GENE FAMILY</scope>
</reference>
<feature type="transit peptide" description="Mitochondrion" evidence="1">
    <location>
        <begin position="1"/>
        <end position="34"/>
    </location>
</feature>
<feature type="chain" id="PRO_0000363416" description="Pentatricopeptide repeat-containing protein At4g01400, mitochondrial">
    <location>
        <begin position="35"/>
        <end position="466"/>
    </location>
</feature>
<feature type="repeat" description="PPR 1">
    <location>
        <begin position="118"/>
        <end position="152"/>
    </location>
</feature>
<feature type="repeat" description="PPR 2">
    <location>
        <begin position="153"/>
        <end position="188"/>
    </location>
</feature>
<feature type="repeat" description="PPR 3">
    <location>
        <begin position="189"/>
        <end position="223"/>
    </location>
</feature>
<feature type="repeat" description="PPR 4">
    <location>
        <begin position="224"/>
        <end position="258"/>
    </location>
</feature>
<feature type="repeat" description="PPR 5">
    <location>
        <begin position="259"/>
        <end position="293"/>
    </location>
</feature>
<feature type="repeat" description="PPR 6">
    <location>
        <begin position="294"/>
        <end position="328"/>
    </location>
</feature>
<feature type="repeat" description="PPR 7">
    <location>
        <begin position="329"/>
        <end position="363"/>
    </location>
</feature>
<feature type="repeat" description="PPR 8">
    <location>
        <begin position="364"/>
        <end position="398"/>
    </location>
</feature>
<organism>
    <name type="scientific">Arabidopsis thaliana</name>
    <name type="common">Mouse-ear cress</name>
    <dbReference type="NCBI Taxonomy" id="3702"/>
    <lineage>
        <taxon>Eukaryota</taxon>
        <taxon>Viridiplantae</taxon>
        <taxon>Streptophyta</taxon>
        <taxon>Embryophyta</taxon>
        <taxon>Tracheophyta</taxon>
        <taxon>Spermatophyta</taxon>
        <taxon>Magnoliopsida</taxon>
        <taxon>eudicotyledons</taxon>
        <taxon>Gunneridae</taxon>
        <taxon>Pentapetalae</taxon>
        <taxon>rosids</taxon>
        <taxon>malvids</taxon>
        <taxon>Brassicales</taxon>
        <taxon>Brassicaceae</taxon>
        <taxon>Camelineae</taxon>
        <taxon>Arabidopsis</taxon>
    </lineage>
</organism>
<sequence>MIRRPIYDFAAVFRHLTSPLSTSSRFLFYSSSEHEARKPIVSNPKSPIGSPTRVQKLIASQSDPLLAKEIFDYASQQPNFRHSRSSHLILILKLGRGRYFNLIDDVLAKHRSSGYPLTGEIFTYLIKVYAEAKLPEKVLSTFYKMLEFNFTPQPKHLNRILDVLVSHRGYLQKAFELFKSSRLHGVMPNTRSYNLLMQAFCLNDDLSIAYQLFGKMLERDVVPDVDSYKILIQGFCRKGQVNGAMELLDDMLNKGFVPDRLSYTTLLNSLCRKTQLREAYKLLCRMKLKGCNPDLVHYNTMILGFCREDRAMDARKVLDDMLSNGCSPNSVSYRTLIGGLCDQGMFDEGKKYLEEMISKGFSPHFSVSNCLVKGFCSFGKVEEACDVVEVVMKNGETLHSDTWEMVIPLICNEDESEKIKLFLEDAVKEEITGDTRIVDVGIGLGSYLSSKLQMKRKNARERRRHL</sequence>
<proteinExistence type="evidence at transcript level"/>
<gene>
    <name type="ordered locus">At4g01400</name>
    <name type="ORF">F3D13.1</name>
</gene>
<keyword id="KW-0496">Mitochondrion</keyword>
<keyword id="KW-1185">Reference proteome</keyword>
<keyword id="KW-0677">Repeat</keyword>
<keyword id="KW-0809">Transit peptide</keyword>
<protein>
    <recommendedName>
        <fullName>Pentatricopeptide repeat-containing protein At4g01400, mitochondrial</fullName>
    </recommendedName>
</protein>
<name>PP298_ARATH</name>
<evidence type="ECO:0000255" key="1"/>
<evidence type="ECO:0000305" key="2"/>
<dbReference type="EMBL" id="AF069300">
    <property type="protein sequence ID" value="AAC19289.1"/>
    <property type="status" value="ALT_SEQ"/>
    <property type="molecule type" value="Genomic_DNA"/>
</dbReference>
<dbReference type="EMBL" id="AL161491">
    <property type="protein sequence ID" value="CAB80949.1"/>
    <property type="status" value="ALT_SEQ"/>
    <property type="molecule type" value="Genomic_DNA"/>
</dbReference>
<dbReference type="EMBL" id="CP002687">
    <property type="protein sequence ID" value="AEE82019.2"/>
    <property type="molecule type" value="Genomic_DNA"/>
</dbReference>
<dbReference type="EMBL" id="AY085796">
    <property type="protein sequence ID" value="AAM63012.1"/>
    <property type="status" value="ALT_SEQ"/>
    <property type="molecule type" value="mRNA"/>
</dbReference>
<dbReference type="PIR" id="C85018">
    <property type="entry name" value="C85018"/>
</dbReference>
<dbReference type="PIR" id="T01377">
    <property type="entry name" value="T01377"/>
</dbReference>
<dbReference type="RefSeq" id="NP_001154199.1">
    <property type="nucleotide sequence ID" value="NM_001160727.2"/>
</dbReference>
<dbReference type="SMR" id="Q8LDU5"/>
<dbReference type="BioGRID" id="13234">
    <property type="interactions" value="8"/>
</dbReference>
<dbReference type="FunCoup" id="Q8LDU5">
    <property type="interactions" value="156"/>
</dbReference>
<dbReference type="STRING" id="3702.Q8LDU5"/>
<dbReference type="iPTMnet" id="Q8LDU5"/>
<dbReference type="EnsemblPlants" id="AT4G01400.1">
    <property type="protein sequence ID" value="AT4G01400.1"/>
    <property type="gene ID" value="AT4G01400"/>
</dbReference>
<dbReference type="GeneID" id="28719435"/>
<dbReference type="Gramene" id="AT4G01400.1">
    <property type="protein sequence ID" value="AT4G01400.1"/>
    <property type="gene ID" value="AT4G01400"/>
</dbReference>
<dbReference type="KEGG" id="ath:AT4G01400"/>
<dbReference type="Araport" id="AT4G01400"/>
<dbReference type="TAIR" id="AT4G01400">
    <property type="gene designation" value="MISF74"/>
</dbReference>
<dbReference type="HOGENOM" id="CLU_021558_1_0_1"/>
<dbReference type="InParanoid" id="Q8LDU5"/>
<dbReference type="OMA" id="NFIRPAF"/>
<dbReference type="PhylomeDB" id="Q8LDU5"/>
<dbReference type="PRO" id="PR:Q8LDU5"/>
<dbReference type="Proteomes" id="UP000006548">
    <property type="component" value="Chromosome 4"/>
</dbReference>
<dbReference type="ExpressionAtlas" id="Q8LDU5">
    <property type="expression patterns" value="baseline and differential"/>
</dbReference>
<dbReference type="GO" id="GO:0005829">
    <property type="term" value="C:cytosol"/>
    <property type="evidence" value="ECO:0007005"/>
    <property type="project" value="TAIR"/>
</dbReference>
<dbReference type="GO" id="GO:0005739">
    <property type="term" value="C:mitochondrion"/>
    <property type="evidence" value="ECO:0007669"/>
    <property type="project" value="UniProtKB-SubCell"/>
</dbReference>
<dbReference type="GO" id="GO:0000373">
    <property type="term" value="P:Group II intron splicing"/>
    <property type="evidence" value="ECO:0000315"/>
    <property type="project" value="TAIR"/>
</dbReference>
<dbReference type="GO" id="GO:0032981">
    <property type="term" value="P:mitochondrial respiratory chain complex I assembly"/>
    <property type="evidence" value="ECO:0000315"/>
    <property type="project" value="TAIR"/>
</dbReference>
<dbReference type="GO" id="GO:0000963">
    <property type="term" value="P:mitochondrial RNA processing"/>
    <property type="evidence" value="ECO:0000315"/>
    <property type="project" value="TAIR"/>
</dbReference>
<dbReference type="FunFam" id="1.25.40.10:FF:001833">
    <property type="entry name" value="Pentatricopeptide repeat-containing protein At3g13160, mitochondrial"/>
    <property type="match status" value="1"/>
</dbReference>
<dbReference type="Gene3D" id="1.25.40.10">
    <property type="entry name" value="Tetratricopeptide repeat domain"/>
    <property type="match status" value="2"/>
</dbReference>
<dbReference type="InterPro" id="IPR002885">
    <property type="entry name" value="Pentatricopeptide_rpt"/>
</dbReference>
<dbReference type="InterPro" id="IPR011990">
    <property type="entry name" value="TPR-like_helical_dom_sf"/>
</dbReference>
<dbReference type="NCBIfam" id="TIGR00756">
    <property type="entry name" value="PPR"/>
    <property type="match status" value="6"/>
</dbReference>
<dbReference type="PANTHER" id="PTHR47936:SF3">
    <property type="entry name" value="PENTACOTRIPEPTIDE-REPEAT REGION OF PRORP DOMAIN-CONTAINING PROTEIN"/>
    <property type="match status" value="1"/>
</dbReference>
<dbReference type="PANTHER" id="PTHR47936">
    <property type="entry name" value="PPR_LONG DOMAIN-CONTAINING PROTEIN"/>
    <property type="match status" value="1"/>
</dbReference>
<dbReference type="Pfam" id="PF01535">
    <property type="entry name" value="PPR"/>
    <property type="match status" value="2"/>
</dbReference>
<dbReference type="Pfam" id="PF12854">
    <property type="entry name" value="PPR_1"/>
    <property type="match status" value="1"/>
</dbReference>
<dbReference type="Pfam" id="PF13041">
    <property type="entry name" value="PPR_2"/>
    <property type="match status" value="2"/>
</dbReference>
<dbReference type="PROSITE" id="PS51375">
    <property type="entry name" value="PPR"/>
    <property type="match status" value="8"/>
</dbReference>
<comment type="subcellular location">
    <subcellularLocation>
        <location evidence="2">Mitochondrion</location>
    </subcellularLocation>
</comment>
<comment type="similarity">
    <text evidence="2">Belongs to the PPR family. P subfamily.</text>
</comment>
<comment type="sequence caution" evidence="2">
    <conflict type="erroneous gene model prediction">
        <sequence resource="EMBL-CDS" id="AAC19289"/>
    </conflict>
    <text>The predicted gene has been split into 2 genes: At4g01395 and At4g01400.</text>
</comment>
<comment type="sequence caution" evidence="2">
    <conflict type="erroneous termination">
        <sequence resource="EMBL-CDS" id="AAM63012"/>
    </conflict>
    <text>Truncated C-terminus.</text>
</comment>
<comment type="sequence caution" evidence="2">
    <conflict type="erroneous gene model prediction">
        <sequence resource="EMBL-CDS" id="CAB80949"/>
    </conflict>
    <text>The predicted gene has been split into 2 genes: At4g01395 and At4g01400.</text>
</comment>
<comment type="online information" name="Pentatricopeptide repeat proteins">
    <link uri="https://ppr.plantenergy.uwa.edu.au"/>
</comment>